<sequence length="256" mass="29278">MYPTKFRRGVSYSQRRFVSRNQSSKRGTFVRRTDGKRRKGPSSKAHDEPKMKLQRIHENQYGPEFVMTHNSALSTFINFPVLGKIEPNRSRSYIKLNRLSFKGTVKIERVHADVNMDGVISKIEGVFSLVIVVDRKPHLSSTGGLHTFDEIFGARIHSHGNLAITPGLKDRYYVLHVLKRVLSVEKDTLMVDLEGSTTISNRRYNCWASFNDLEHDLCNGVYANISKNAILVYYCWMSDAMSKASTFVSYDLDYLG</sequence>
<proteinExistence type="evidence at protein level"/>
<evidence type="ECO:0000250" key="1"/>
<evidence type="ECO:0000256" key="2">
    <source>
        <dbReference type="SAM" id="MobiDB-lite"/>
    </source>
</evidence>
<evidence type="ECO:0000269" key="3">
    <source>
    </source>
</evidence>
<evidence type="ECO:0000269" key="4">
    <source>
    </source>
</evidence>
<evidence type="ECO:0000269" key="5">
    <source>
    </source>
</evidence>
<evidence type="ECO:0000305" key="6"/>
<keyword id="KW-0238">DNA-binding</keyword>
<keyword id="KW-1032">Host cell membrane</keyword>
<keyword id="KW-1035">Host cytoplasm</keyword>
<keyword id="KW-1043">Host membrane</keyword>
<keyword id="KW-1048">Host nucleus</keyword>
<keyword id="KW-0945">Host-virus interaction</keyword>
<keyword id="KW-0472">Membrane</keyword>
<keyword id="KW-0813">Transport</keyword>
<keyword id="KW-0916">Viral movement protein</keyword>
<gene>
    <name type="ORF">BR1</name>
    <name type="ORF">BV1</name>
</gene>
<protein>
    <recommendedName>
        <fullName>Nuclear shuttle protein</fullName>
        <shortName>NSP</shortName>
    </recommendedName>
    <alternativeName>
        <fullName>Protein BR1</fullName>
    </alternativeName>
    <alternativeName>
        <fullName>Protein BV1</fullName>
    </alternativeName>
</protein>
<organismHost>
    <name type="scientific">Brassica oleracea</name>
    <name type="common">Wild cabbage</name>
    <dbReference type="NCBI Taxonomy" id="3712"/>
</organismHost>
<dbReference type="EMBL" id="U65530">
    <property type="protein sequence ID" value="AAB17965.1"/>
    <property type="molecule type" value="Genomic_DNA"/>
</dbReference>
<dbReference type="KEGG" id="vg:993362"/>
<dbReference type="Proteomes" id="UP000007622">
    <property type="component" value="Genome"/>
</dbReference>
<dbReference type="GO" id="GO:0043657">
    <property type="term" value="C:host cell"/>
    <property type="evidence" value="ECO:0007669"/>
    <property type="project" value="InterPro"/>
</dbReference>
<dbReference type="GO" id="GO:0030430">
    <property type="term" value="C:host cell cytoplasm"/>
    <property type="evidence" value="ECO:0007669"/>
    <property type="project" value="UniProtKB-SubCell"/>
</dbReference>
<dbReference type="GO" id="GO:0042025">
    <property type="term" value="C:host cell nucleus"/>
    <property type="evidence" value="ECO:0007669"/>
    <property type="project" value="UniProtKB-SubCell"/>
</dbReference>
<dbReference type="GO" id="GO:0020002">
    <property type="term" value="C:host cell plasma membrane"/>
    <property type="evidence" value="ECO:0007669"/>
    <property type="project" value="UniProtKB-SubCell"/>
</dbReference>
<dbReference type="GO" id="GO:0016020">
    <property type="term" value="C:membrane"/>
    <property type="evidence" value="ECO:0007669"/>
    <property type="project" value="UniProtKB-KW"/>
</dbReference>
<dbReference type="GO" id="GO:0019028">
    <property type="term" value="C:viral capsid"/>
    <property type="evidence" value="ECO:0007669"/>
    <property type="project" value="InterPro"/>
</dbReference>
<dbReference type="GO" id="GO:0003697">
    <property type="term" value="F:single-stranded DNA binding"/>
    <property type="evidence" value="ECO:0007669"/>
    <property type="project" value="InterPro"/>
</dbReference>
<dbReference type="GO" id="GO:0005198">
    <property type="term" value="F:structural molecule activity"/>
    <property type="evidence" value="ECO:0007669"/>
    <property type="project" value="InterPro"/>
</dbReference>
<dbReference type="GO" id="GO:0051027">
    <property type="term" value="P:DNA transport"/>
    <property type="evidence" value="ECO:0007669"/>
    <property type="project" value="InterPro"/>
</dbReference>
<dbReference type="GO" id="GO:0046740">
    <property type="term" value="P:transport of virus in host, cell to cell"/>
    <property type="evidence" value="ECO:0007669"/>
    <property type="project" value="UniProtKB-KW"/>
</dbReference>
<dbReference type="InterPro" id="IPR001530">
    <property type="entry name" value="Gemini_BR1"/>
</dbReference>
<dbReference type="InterPro" id="IPR000263">
    <property type="entry name" value="GV_A/BR1_coat"/>
</dbReference>
<dbReference type="Pfam" id="PF00844">
    <property type="entry name" value="Gemini_coat"/>
    <property type="match status" value="1"/>
</dbReference>
<dbReference type="PRINTS" id="PR00223">
    <property type="entry name" value="GEMCOATARBR1"/>
</dbReference>
<dbReference type="PRINTS" id="PR00225">
    <property type="entry name" value="GEMCOATBR1"/>
</dbReference>
<comment type="function">
    <text evidence="1">Binds to the genomic viral ssDNA, shuttles it into and out of the cell nucleus. Begomoviruses use 2 proteins to transport their DNA from cell to cell. The nuclear shuttle protein (NSP) shuttles it between nucleus and cytoplasm and the movement protein (MP) probably transports the DNA-NSP complex to the cell periphery and facilitates movement across the cell wall (By similarity).</text>
</comment>
<comment type="subunit">
    <text evidence="3 4 5">Binds to single-stranded and double-stranded viral DNA. Interacts with the host nuclear shuttle interacting (NSI) protein. This interaction may allow NSP to recruit NSI monomers to the viral genome and thus regulate nuclear export of viral genome by NSP.</text>
</comment>
<comment type="subcellular location">
    <subcellularLocation>
        <location evidence="1">Host nucleus</location>
    </subcellularLocation>
    <subcellularLocation>
        <location evidence="1">Host cytoplasm</location>
    </subcellularLocation>
    <subcellularLocation>
        <location evidence="1">Host cell membrane</location>
        <topology evidence="1">Peripheral membrane protein</topology>
        <orientation evidence="1">Cytoplasmic side</orientation>
    </subcellularLocation>
    <text evidence="1">Translocated to the plasma membrane by the movement protein BC1.</text>
</comment>
<comment type="similarity">
    <text evidence="6">Belongs to the begomovirus nuclear shuttle protein family.</text>
</comment>
<accession>Q96706</accession>
<feature type="chain" id="PRO_0000323698" description="Nuclear shuttle protein">
    <location>
        <begin position="1"/>
        <end position="256"/>
    </location>
</feature>
<feature type="region of interest" description="Disordered" evidence="2">
    <location>
        <begin position="18"/>
        <end position="50"/>
    </location>
</feature>
<feature type="region of interest" description="Interaction with Arabidopsis thaliana NSI protein">
    <location>
        <begin position="150"/>
        <end position="187"/>
    </location>
</feature>
<feature type="short sequence motif" description="Bipartite nuclear localization signal" evidence="1">
    <location>
        <begin position="21"/>
        <end position="42"/>
    </location>
</feature>
<feature type="short sequence motif" description="Nuclear localization signal" evidence="1">
    <location>
        <begin position="81"/>
        <end position="96"/>
    </location>
</feature>
<feature type="mutagenesis site" description="Complete loss of interaction with Arabidopsis thaliana NSI protein. Reduced level of infectivity." evidence="4">
    <original>E</original>
    <variation>G</variation>
    <location>
        <position position="150"/>
    </location>
</feature>
<feature type="mutagenesis site" description="Complete loss of interaction with Arabidopsis thaliana NSI protein. Reduced level of infectivity." evidence="4">
    <original>I</original>
    <variation>T</variation>
    <location>
        <position position="164"/>
    </location>
</feature>
<feature type="mutagenesis site" description="Complete loss of interaction with Arabidopsis thaliana NSI protein. Reduced level of infectivity." evidence="4">
    <original>D</original>
    <variation>G</variation>
    <location>
        <position position="187"/>
    </location>
</feature>
<organism>
    <name type="scientific">Cabbage leaf curl virus (isolate Jamaica)</name>
    <name type="common">CaLCuV</name>
    <dbReference type="NCBI Taxonomy" id="345184"/>
    <lineage>
        <taxon>Viruses</taxon>
        <taxon>Monodnaviria</taxon>
        <taxon>Shotokuvirae</taxon>
        <taxon>Cressdnaviricota</taxon>
        <taxon>Repensiviricetes</taxon>
        <taxon>Geplafuvirales</taxon>
        <taxon>Geminiviridae</taxon>
        <taxon>Begomovirus</taxon>
    </lineage>
</organism>
<name>NSP_CALCV</name>
<reference key="1">
    <citation type="journal article" date="1992" name="Phytopathology">
        <title>Cloning, identification and partial sequencing of a new geminivirus infecting Brassicaceae.</title>
        <authorList>
            <person name="Abouzid A.M."/>
            <person name="Hiebert E."/>
            <person name="Strandberg J.O."/>
        </authorList>
    </citation>
    <scope>NUCLEOTIDE SEQUENCE [GENOMIC DNA]</scope>
</reference>
<reference key="2">
    <citation type="journal article" date="2003" name="Plant Cell">
        <title>A novel Arabidopsis acetyltransferase interacts with the geminivirus movement protein NSP.</title>
        <authorList>
            <person name="McGarry R.C."/>
            <person name="Barron Y.D."/>
            <person name="Carvalho M.F."/>
            <person name="Hill J.E."/>
            <person name="Gold D."/>
            <person name="Cheung E."/>
            <person name="Kraus W.L."/>
            <person name="Lazarowitz S.G."/>
        </authorList>
    </citation>
    <scope>INTERACTION WITH ARABIDOPSIS THALIANA NSI</scope>
</reference>
<reference key="3">
    <citation type="journal article" date="2004" name="J. Virol.">
        <title>Interaction of the movement protein NSP and the Arabidopsis acetyltransferase AtNSI is necessary for Cabbage leaf curl geminivirus infection and pathogenicity.</title>
        <authorList>
            <person name="Carvalho M.F."/>
            <person name="Lazarowitz S.G."/>
        </authorList>
    </citation>
    <scope>INTERACTION WITH ARABIDOPSIS THALIANA NSI</scope>
    <scope>MUTAGENESIS OF GLU-150; ILE-164 AND ASP-187</scope>
</reference>
<reference key="4">
    <citation type="journal article" date="2006" name="Plant Physiol.">
        <title>The geminivirus nuclear shuttle protein NSP inhibits the activity of AtNSI, a vascular-expressed Arabidopsis acetyltransferase regulated with the sink-to-source transition.</title>
        <authorList>
            <person name="Carvalho M.F."/>
            <person name="Turgeon R."/>
            <person name="Lazarowitz S.G."/>
        </authorList>
    </citation>
    <scope>INTERACTION WITH ARABIDOPSIS THALIANA NSI</scope>
</reference>